<reference key="1">
    <citation type="submission" date="2009-03" db="EMBL/GenBank/DDBJ databases">
        <title>Comparison of the complete genome sequences of Rhodococcus erythropolis PR4 and Rhodococcus opacus B4.</title>
        <authorList>
            <person name="Takarada H."/>
            <person name="Sekine M."/>
            <person name="Hosoyama A."/>
            <person name="Yamada R."/>
            <person name="Fujisawa T."/>
            <person name="Omata S."/>
            <person name="Shimizu A."/>
            <person name="Tsukatani N."/>
            <person name="Tanikawa S."/>
            <person name="Fujita N."/>
            <person name="Harayama S."/>
        </authorList>
    </citation>
    <scope>NUCLEOTIDE SEQUENCE [LARGE SCALE GENOMIC DNA]</scope>
    <source>
        <strain>B4</strain>
    </source>
</reference>
<evidence type="ECO:0000250" key="1"/>
<evidence type="ECO:0000255" key="2">
    <source>
        <dbReference type="HAMAP-Rule" id="MF_00118"/>
    </source>
</evidence>
<keyword id="KW-0963">Cytoplasm</keyword>
<keyword id="KW-0251">Elongation factor</keyword>
<keyword id="KW-0342">GTP-binding</keyword>
<keyword id="KW-0378">Hydrolase</keyword>
<keyword id="KW-0460">Magnesium</keyword>
<keyword id="KW-0479">Metal-binding</keyword>
<keyword id="KW-0547">Nucleotide-binding</keyword>
<keyword id="KW-0648">Protein biosynthesis</keyword>
<proteinExistence type="inferred from homology"/>
<dbReference type="EC" id="3.6.5.3" evidence="2"/>
<dbReference type="EMBL" id="AP011115">
    <property type="protein sequence ID" value="BAH49851.1"/>
    <property type="molecule type" value="Genomic_DNA"/>
</dbReference>
<dbReference type="RefSeq" id="WP_005252203.1">
    <property type="nucleotide sequence ID" value="NC_012522.1"/>
</dbReference>
<dbReference type="SMR" id="C1AYS3"/>
<dbReference type="STRING" id="632772.ROP_16040"/>
<dbReference type="GeneID" id="69893615"/>
<dbReference type="KEGG" id="rop:ROP_16040"/>
<dbReference type="PATRIC" id="fig|632772.20.peg.1684"/>
<dbReference type="HOGENOM" id="CLU_007265_0_1_11"/>
<dbReference type="OrthoDB" id="9803139at2"/>
<dbReference type="Proteomes" id="UP000002212">
    <property type="component" value="Chromosome"/>
</dbReference>
<dbReference type="GO" id="GO:0005829">
    <property type="term" value="C:cytosol"/>
    <property type="evidence" value="ECO:0007669"/>
    <property type="project" value="TreeGrafter"/>
</dbReference>
<dbReference type="GO" id="GO:0005525">
    <property type="term" value="F:GTP binding"/>
    <property type="evidence" value="ECO:0007669"/>
    <property type="project" value="UniProtKB-UniRule"/>
</dbReference>
<dbReference type="GO" id="GO:0003924">
    <property type="term" value="F:GTPase activity"/>
    <property type="evidence" value="ECO:0007669"/>
    <property type="project" value="InterPro"/>
</dbReference>
<dbReference type="GO" id="GO:0003746">
    <property type="term" value="F:translation elongation factor activity"/>
    <property type="evidence" value="ECO:0007669"/>
    <property type="project" value="UniProtKB-UniRule"/>
</dbReference>
<dbReference type="CDD" id="cd01884">
    <property type="entry name" value="EF_Tu"/>
    <property type="match status" value="1"/>
</dbReference>
<dbReference type="CDD" id="cd03697">
    <property type="entry name" value="EFTU_II"/>
    <property type="match status" value="1"/>
</dbReference>
<dbReference type="CDD" id="cd03707">
    <property type="entry name" value="EFTU_III"/>
    <property type="match status" value="1"/>
</dbReference>
<dbReference type="FunFam" id="2.40.30.10:FF:000001">
    <property type="entry name" value="Elongation factor Tu"/>
    <property type="match status" value="1"/>
</dbReference>
<dbReference type="FunFam" id="3.40.50.300:FF:000003">
    <property type="entry name" value="Elongation factor Tu"/>
    <property type="match status" value="1"/>
</dbReference>
<dbReference type="Gene3D" id="3.40.50.300">
    <property type="entry name" value="P-loop containing nucleotide triphosphate hydrolases"/>
    <property type="match status" value="1"/>
</dbReference>
<dbReference type="Gene3D" id="2.40.30.10">
    <property type="entry name" value="Translation factors"/>
    <property type="match status" value="2"/>
</dbReference>
<dbReference type="HAMAP" id="MF_00118_B">
    <property type="entry name" value="EF_Tu_B"/>
    <property type="match status" value="1"/>
</dbReference>
<dbReference type="InterPro" id="IPR041709">
    <property type="entry name" value="EF-Tu_GTP-bd"/>
</dbReference>
<dbReference type="InterPro" id="IPR050055">
    <property type="entry name" value="EF-Tu_GTPase"/>
</dbReference>
<dbReference type="InterPro" id="IPR004161">
    <property type="entry name" value="EFTu-like_2"/>
</dbReference>
<dbReference type="InterPro" id="IPR033720">
    <property type="entry name" value="EFTU_2"/>
</dbReference>
<dbReference type="InterPro" id="IPR031157">
    <property type="entry name" value="G_TR_CS"/>
</dbReference>
<dbReference type="InterPro" id="IPR027417">
    <property type="entry name" value="P-loop_NTPase"/>
</dbReference>
<dbReference type="InterPro" id="IPR005225">
    <property type="entry name" value="Small_GTP-bd"/>
</dbReference>
<dbReference type="InterPro" id="IPR000795">
    <property type="entry name" value="T_Tr_GTP-bd_dom"/>
</dbReference>
<dbReference type="InterPro" id="IPR009000">
    <property type="entry name" value="Transl_B-barrel_sf"/>
</dbReference>
<dbReference type="InterPro" id="IPR009001">
    <property type="entry name" value="Transl_elong_EF1A/Init_IF2_C"/>
</dbReference>
<dbReference type="InterPro" id="IPR004541">
    <property type="entry name" value="Transl_elong_EFTu/EF1A_bac/org"/>
</dbReference>
<dbReference type="InterPro" id="IPR004160">
    <property type="entry name" value="Transl_elong_EFTu/EF1A_C"/>
</dbReference>
<dbReference type="NCBIfam" id="TIGR00485">
    <property type="entry name" value="EF-Tu"/>
    <property type="match status" value="1"/>
</dbReference>
<dbReference type="NCBIfam" id="NF000766">
    <property type="entry name" value="PRK00049.1"/>
    <property type="match status" value="1"/>
</dbReference>
<dbReference type="NCBIfam" id="NF009372">
    <property type="entry name" value="PRK12735.1"/>
    <property type="match status" value="1"/>
</dbReference>
<dbReference type="NCBIfam" id="NF009373">
    <property type="entry name" value="PRK12736.1"/>
    <property type="match status" value="1"/>
</dbReference>
<dbReference type="NCBIfam" id="TIGR00231">
    <property type="entry name" value="small_GTP"/>
    <property type="match status" value="1"/>
</dbReference>
<dbReference type="PANTHER" id="PTHR43721:SF22">
    <property type="entry name" value="ELONGATION FACTOR TU, MITOCHONDRIAL"/>
    <property type="match status" value="1"/>
</dbReference>
<dbReference type="PANTHER" id="PTHR43721">
    <property type="entry name" value="ELONGATION FACTOR TU-RELATED"/>
    <property type="match status" value="1"/>
</dbReference>
<dbReference type="Pfam" id="PF00009">
    <property type="entry name" value="GTP_EFTU"/>
    <property type="match status" value="1"/>
</dbReference>
<dbReference type="Pfam" id="PF03144">
    <property type="entry name" value="GTP_EFTU_D2"/>
    <property type="match status" value="1"/>
</dbReference>
<dbReference type="Pfam" id="PF03143">
    <property type="entry name" value="GTP_EFTU_D3"/>
    <property type="match status" value="1"/>
</dbReference>
<dbReference type="PRINTS" id="PR00315">
    <property type="entry name" value="ELONGATNFCT"/>
</dbReference>
<dbReference type="SUPFAM" id="SSF50465">
    <property type="entry name" value="EF-Tu/eEF-1alpha/eIF2-gamma C-terminal domain"/>
    <property type="match status" value="1"/>
</dbReference>
<dbReference type="SUPFAM" id="SSF52540">
    <property type="entry name" value="P-loop containing nucleoside triphosphate hydrolases"/>
    <property type="match status" value="1"/>
</dbReference>
<dbReference type="SUPFAM" id="SSF50447">
    <property type="entry name" value="Translation proteins"/>
    <property type="match status" value="1"/>
</dbReference>
<dbReference type="PROSITE" id="PS00301">
    <property type="entry name" value="G_TR_1"/>
    <property type="match status" value="1"/>
</dbReference>
<dbReference type="PROSITE" id="PS51722">
    <property type="entry name" value="G_TR_2"/>
    <property type="match status" value="1"/>
</dbReference>
<protein>
    <recommendedName>
        <fullName evidence="2">Elongation factor Tu</fullName>
        <shortName evidence="2">EF-Tu</shortName>
        <ecNumber evidence="2">3.6.5.3</ecNumber>
    </recommendedName>
</protein>
<sequence>MAKAKFERTKPHVNIGTIGHVDHGKTTLTAAITKVLHDAYPDLNEASAFDEIDKAPEEKARGITINISHVEYQTEKRHYAHVDAPGHADYIKNMITGAAQMDGAILVVAATDGPMPQTREHVLLARQVGVPYILVALNKADMVDDDEIIELVEMEVRELLAAQEFDEDAPVVKVSALKALEGDPEWTKNILELMAAVDESIPDPVRETEKPFLMPVEDVFTITGRGTVVTGRIERGVINVNEDVEIVGIKETKTKTTVTGIEMFRKLLDSGQAGDNVGLLVRGIKREDVERGQVVVKPGTTTPHTEFEGQAYILSKDEGGRHTPFFNNYRPQFYFRTTDVTGVVTLPEGTEMVMPGDNTEMSVKLIQPVAMDEGLRFAIREGGRTVGAGKVTKINK</sequence>
<gene>
    <name evidence="2" type="primary">tuf</name>
    <name type="ordered locus">ROP_16040</name>
</gene>
<organism>
    <name type="scientific">Rhodococcus opacus (strain B4)</name>
    <dbReference type="NCBI Taxonomy" id="632772"/>
    <lineage>
        <taxon>Bacteria</taxon>
        <taxon>Bacillati</taxon>
        <taxon>Actinomycetota</taxon>
        <taxon>Actinomycetes</taxon>
        <taxon>Mycobacteriales</taxon>
        <taxon>Nocardiaceae</taxon>
        <taxon>Rhodococcus</taxon>
    </lineage>
</organism>
<feature type="chain" id="PRO_1000201411" description="Elongation factor Tu">
    <location>
        <begin position="1"/>
        <end position="396"/>
    </location>
</feature>
<feature type="domain" description="tr-type G">
    <location>
        <begin position="10"/>
        <end position="205"/>
    </location>
</feature>
<feature type="region of interest" description="G1" evidence="1">
    <location>
        <begin position="19"/>
        <end position="26"/>
    </location>
</feature>
<feature type="region of interest" description="G2" evidence="1">
    <location>
        <begin position="62"/>
        <end position="66"/>
    </location>
</feature>
<feature type="region of interest" description="G3" evidence="1">
    <location>
        <begin position="83"/>
        <end position="86"/>
    </location>
</feature>
<feature type="region of interest" description="G4" evidence="1">
    <location>
        <begin position="138"/>
        <end position="141"/>
    </location>
</feature>
<feature type="region of interest" description="G5" evidence="1">
    <location>
        <begin position="175"/>
        <end position="177"/>
    </location>
</feature>
<feature type="binding site" evidence="2">
    <location>
        <begin position="19"/>
        <end position="26"/>
    </location>
    <ligand>
        <name>GTP</name>
        <dbReference type="ChEBI" id="CHEBI:37565"/>
    </ligand>
</feature>
<feature type="binding site" evidence="2">
    <location>
        <position position="26"/>
    </location>
    <ligand>
        <name>Mg(2+)</name>
        <dbReference type="ChEBI" id="CHEBI:18420"/>
    </ligand>
</feature>
<feature type="binding site" evidence="2">
    <location>
        <begin position="83"/>
        <end position="87"/>
    </location>
    <ligand>
        <name>GTP</name>
        <dbReference type="ChEBI" id="CHEBI:37565"/>
    </ligand>
</feature>
<feature type="binding site" evidence="2">
    <location>
        <begin position="138"/>
        <end position="141"/>
    </location>
    <ligand>
        <name>GTP</name>
        <dbReference type="ChEBI" id="CHEBI:37565"/>
    </ligand>
</feature>
<accession>C1AYS3</accession>
<comment type="function">
    <text evidence="2">GTP hydrolase that promotes the GTP-dependent binding of aminoacyl-tRNA to the A-site of ribosomes during protein biosynthesis.</text>
</comment>
<comment type="catalytic activity">
    <reaction evidence="2">
        <text>GTP + H2O = GDP + phosphate + H(+)</text>
        <dbReference type="Rhea" id="RHEA:19669"/>
        <dbReference type="ChEBI" id="CHEBI:15377"/>
        <dbReference type="ChEBI" id="CHEBI:15378"/>
        <dbReference type="ChEBI" id="CHEBI:37565"/>
        <dbReference type="ChEBI" id="CHEBI:43474"/>
        <dbReference type="ChEBI" id="CHEBI:58189"/>
        <dbReference type="EC" id="3.6.5.3"/>
    </reaction>
    <physiologicalReaction direction="left-to-right" evidence="2">
        <dbReference type="Rhea" id="RHEA:19670"/>
    </physiologicalReaction>
</comment>
<comment type="subunit">
    <text evidence="2">Monomer.</text>
</comment>
<comment type="subcellular location">
    <subcellularLocation>
        <location evidence="2">Cytoplasm</location>
    </subcellularLocation>
</comment>
<comment type="similarity">
    <text evidence="2">Belongs to the TRAFAC class translation factor GTPase superfamily. Classic translation factor GTPase family. EF-Tu/EF-1A subfamily.</text>
</comment>
<name>EFTU_RHOOB</name>